<gene>
    <name type="ordered locus">PputGB1_4424</name>
</gene>
<protein>
    <recommendedName>
        <fullName evidence="1">Oxaloacetate decarboxylase</fullName>
        <ecNumber evidence="1">4.1.1.112</ecNumber>
    </recommendedName>
</protein>
<evidence type="ECO:0000255" key="1">
    <source>
        <dbReference type="HAMAP-Rule" id="MF_01299"/>
    </source>
</evidence>
<evidence type="ECO:0000305" key="2"/>
<feature type="chain" id="PRO_0000364067" description="Oxaloacetate decarboxylase">
    <location>
        <begin position="1"/>
        <end position="289"/>
    </location>
</feature>
<feature type="binding site" evidence="1">
    <location>
        <position position="50"/>
    </location>
    <ligand>
        <name>substrate</name>
    </ligand>
</feature>
<feature type="binding site" evidence="1">
    <location>
        <position position="88"/>
    </location>
    <ligand>
        <name>Mg(2+)</name>
        <dbReference type="ChEBI" id="CHEBI:18420"/>
    </ligand>
</feature>
<feature type="binding site" evidence="1">
    <location>
        <position position="159"/>
    </location>
    <ligand>
        <name>substrate</name>
    </ligand>
</feature>
<feature type="binding site" evidence="1">
    <location>
        <position position="235"/>
    </location>
    <ligand>
        <name>substrate</name>
    </ligand>
</feature>
<name>OADC_PSEPG</name>
<dbReference type="EC" id="4.1.1.112" evidence="1"/>
<dbReference type="EMBL" id="CP000926">
    <property type="protein sequence ID" value="ABZ00313.1"/>
    <property type="molecule type" value="Genomic_DNA"/>
</dbReference>
<dbReference type="RefSeq" id="WP_012273974.1">
    <property type="nucleotide sequence ID" value="NC_010322.1"/>
</dbReference>
<dbReference type="SMR" id="B0KV77"/>
<dbReference type="KEGG" id="ppg:PputGB1_4424"/>
<dbReference type="eggNOG" id="COG2513">
    <property type="taxonomic scope" value="Bacteria"/>
</dbReference>
<dbReference type="HOGENOM" id="CLU_027389_3_2_6"/>
<dbReference type="Proteomes" id="UP000002157">
    <property type="component" value="Chromosome"/>
</dbReference>
<dbReference type="GO" id="GO:0000287">
    <property type="term" value="F:magnesium ion binding"/>
    <property type="evidence" value="ECO:0007669"/>
    <property type="project" value="UniProtKB-UniRule"/>
</dbReference>
<dbReference type="GO" id="GO:0046421">
    <property type="term" value="F:methylisocitrate lyase activity"/>
    <property type="evidence" value="ECO:0007669"/>
    <property type="project" value="TreeGrafter"/>
</dbReference>
<dbReference type="GO" id="GO:0008948">
    <property type="term" value="F:oxaloacetate decarboxylase activity"/>
    <property type="evidence" value="ECO:0007669"/>
    <property type="project" value="UniProtKB-UniRule"/>
</dbReference>
<dbReference type="GO" id="GO:0006107">
    <property type="term" value="P:oxaloacetate metabolic process"/>
    <property type="evidence" value="ECO:0007669"/>
    <property type="project" value="UniProtKB-UniRule"/>
</dbReference>
<dbReference type="GO" id="GO:0019629">
    <property type="term" value="P:propionate catabolic process, 2-methylcitrate cycle"/>
    <property type="evidence" value="ECO:0007669"/>
    <property type="project" value="TreeGrafter"/>
</dbReference>
<dbReference type="GO" id="GO:0042866">
    <property type="term" value="P:pyruvate biosynthetic process"/>
    <property type="evidence" value="ECO:0007669"/>
    <property type="project" value="UniProtKB-UniRule"/>
</dbReference>
<dbReference type="CDD" id="cd00377">
    <property type="entry name" value="ICL_PEPM"/>
    <property type="match status" value="1"/>
</dbReference>
<dbReference type="Gene3D" id="3.20.20.60">
    <property type="entry name" value="Phosphoenolpyruvate-binding domains"/>
    <property type="match status" value="1"/>
</dbReference>
<dbReference type="HAMAP" id="MF_01299">
    <property type="entry name" value="OadC"/>
    <property type="match status" value="1"/>
</dbReference>
<dbReference type="InterPro" id="IPR039556">
    <property type="entry name" value="ICL/PEPM"/>
</dbReference>
<dbReference type="InterPro" id="IPR023687">
    <property type="entry name" value="Oxaloacetate_deCOase_bac"/>
</dbReference>
<dbReference type="InterPro" id="IPR015813">
    <property type="entry name" value="Pyrv/PenolPyrv_kinase-like_dom"/>
</dbReference>
<dbReference type="InterPro" id="IPR040442">
    <property type="entry name" value="Pyrv_kinase-like_dom_sf"/>
</dbReference>
<dbReference type="PANTHER" id="PTHR42905:SF3">
    <property type="entry name" value="OXALOACETATE DECARBOXYLASE"/>
    <property type="match status" value="1"/>
</dbReference>
<dbReference type="PANTHER" id="PTHR42905">
    <property type="entry name" value="PHOSPHOENOLPYRUVATE CARBOXYLASE"/>
    <property type="match status" value="1"/>
</dbReference>
<dbReference type="Pfam" id="PF13714">
    <property type="entry name" value="PEP_mutase"/>
    <property type="match status" value="1"/>
</dbReference>
<dbReference type="SUPFAM" id="SSF51621">
    <property type="entry name" value="Phosphoenolpyruvate/pyruvate domain"/>
    <property type="match status" value="1"/>
</dbReference>
<sequence length="289" mass="31525">MPKASHQDLRFAFRELLASGSCFHTASVFDPMSARIAADLGFEVGILGGSVASLQVLAAPDFALITLSEFVEQATRIGRVAQLPVLADADHGYGNALNVMRTVIELERAGVAALTIEDTLLPAQFGRKSTDLIPVEEGVGKIRAALEARVDSSLSIIARTNAGVLSTEEIIVRTQSYQKAGADAICMVGVKDFEQLEQIAEHLTVPLMLVTYGNPNLRDDERLARLGVRIVVDGHAAYFAAIKATYDCLRLQRGQQNKSENLSATELSHTYTQPEDYIRWAKEYMSVEE</sequence>
<reference key="1">
    <citation type="submission" date="2008-01" db="EMBL/GenBank/DDBJ databases">
        <title>Complete sequence of Pseudomonas putida GB-1.</title>
        <authorList>
            <consortium name="US DOE Joint Genome Institute"/>
            <person name="Copeland A."/>
            <person name="Lucas S."/>
            <person name="Lapidus A."/>
            <person name="Barry K."/>
            <person name="Glavina del Rio T."/>
            <person name="Dalin E."/>
            <person name="Tice H."/>
            <person name="Pitluck S."/>
            <person name="Bruce D."/>
            <person name="Goodwin L."/>
            <person name="Chertkov O."/>
            <person name="Brettin T."/>
            <person name="Detter J.C."/>
            <person name="Han C."/>
            <person name="Kuske C.R."/>
            <person name="Schmutz J."/>
            <person name="Larimer F."/>
            <person name="Land M."/>
            <person name="Hauser L."/>
            <person name="Kyrpides N."/>
            <person name="Kim E."/>
            <person name="McCarthy J.K."/>
            <person name="Richardson P."/>
        </authorList>
    </citation>
    <scope>NUCLEOTIDE SEQUENCE [LARGE SCALE GENOMIC DNA]</scope>
    <source>
        <strain>GB-1</strain>
    </source>
</reference>
<proteinExistence type="inferred from homology"/>
<comment type="function">
    <text evidence="1">Catalyzes the decarboxylation of oxaloacetate into pyruvate. Seems to play a role in maintaining cellular concentrations of bicarbonate and pyruvate.</text>
</comment>
<comment type="catalytic activity">
    <reaction evidence="1">
        <text>oxaloacetate + H(+) = pyruvate + CO2</text>
        <dbReference type="Rhea" id="RHEA:15641"/>
        <dbReference type="ChEBI" id="CHEBI:15361"/>
        <dbReference type="ChEBI" id="CHEBI:15378"/>
        <dbReference type="ChEBI" id="CHEBI:16452"/>
        <dbReference type="ChEBI" id="CHEBI:16526"/>
        <dbReference type="EC" id="4.1.1.112"/>
    </reaction>
</comment>
<comment type="cofactor">
    <cofactor evidence="1">
        <name>Mg(2+)</name>
        <dbReference type="ChEBI" id="CHEBI:18420"/>
    </cofactor>
    <text evidence="1">Binds 1 Mg(2+) ion per subunit.</text>
</comment>
<comment type="subunit">
    <text evidence="1">Homotetramer; dimer of dimers.</text>
</comment>
<comment type="similarity">
    <text evidence="2">Belongs to the isocitrate lyase/PEP mutase superfamily. Oxaloacetate decarboxylase family.</text>
</comment>
<organism>
    <name type="scientific">Pseudomonas putida (strain GB-1)</name>
    <dbReference type="NCBI Taxonomy" id="76869"/>
    <lineage>
        <taxon>Bacteria</taxon>
        <taxon>Pseudomonadati</taxon>
        <taxon>Pseudomonadota</taxon>
        <taxon>Gammaproteobacteria</taxon>
        <taxon>Pseudomonadales</taxon>
        <taxon>Pseudomonadaceae</taxon>
        <taxon>Pseudomonas</taxon>
    </lineage>
</organism>
<keyword id="KW-0210">Decarboxylase</keyword>
<keyword id="KW-0456">Lyase</keyword>
<keyword id="KW-0460">Magnesium</keyword>
<keyword id="KW-0479">Metal-binding</keyword>
<accession>B0KV77</accession>